<comment type="function">
    <text evidence="1">Catalyzes the attachment of serine to tRNA(Ser). Is also able to aminoacylate tRNA(Sec) with serine, to form the misacylated tRNA L-seryl-tRNA(Sec), which will be further converted into selenocysteinyl-tRNA(Sec).</text>
</comment>
<comment type="catalytic activity">
    <reaction evidence="1">
        <text>tRNA(Ser) + L-serine + ATP = L-seryl-tRNA(Ser) + AMP + diphosphate + H(+)</text>
        <dbReference type="Rhea" id="RHEA:12292"/>
        <dbReference type="Rhea" id="RHEA-COMP:9669"/>
        <dbReference type="Rhea" id="RHEA-COMP:9703"/>
        <dbReference type="ChEBI" id="CHEBI:15378"/>
        <dbReference type="ChEBI" id="CHEBI:30616"/>
        <dbReference type="ChEBI" id="CHEBI:33019"/>
        <dbReference type="ChEBI" id="CHEBI:33384"/>
        <dbReference type="ChEBI" id="CHEBI:78442"/>
        <dbReference type="ChEBI" id="CHEBI:78533"/>
        <dbReference type="ChEBI" id="CHEBI:456215"/>
        <dbReference type="EC" id="6.1.1.11"/>
    </reaction>
</comment>
<comment type="catalytic activity">
    <reaction evidence="1">
        <text>tRNA(Sec) + L-serine + ATP = L-seryl-tRNA(Sec) + AMP + diphosphate + H(+)</text>
        <dbReference type="Rhea" id="RHEA:42580"/>
        <dbReference type="Rhea" id="RHEA-COMP:9742"/>
        <dbReference type="Rhea" id="RHEA-COMP:10128"/>
        <dbReference type="ChEBI" id="CHEBI:15378"/>
        <dbReference type="ChEBI" id="CHEBI:30616"/>
        <dbReference type="ChEBI" id="CHEBI:33019"/>
        <dbReference type="ChEBI" id="CHEBI:33384"/>
        <dbReference type="ChEBI" id="CHEBI:78442"/>
        <dbReference type="ChEBI" id="CHEBI:78533"/>
        <dbReference type="ChEBI" id="CHEBI:456215"/>
        <dbReference type="EC" id="6.1.1.11"/>
    </reaction>
</comment>
<comment type="pathway">
    <text evidence="1">Aminoacyl-tRNA biosynthesis; selenocysteinyl-tRNA(Sec) biosynthesis; L-seryl-tRNA(Sec) from L-serine and tRNA(Sec): step 1/1.</text>
</comment>
<comment type="subunit">
    <text evidence="1">Homodimer. The tRNA molecule binds across the dimer.</text>
</comment>
<comment type="subcellular location">
    <subcellularLocation>
        <location evidence="1">Cytoplasm</location>
    </subcellularLocation>
</comment>
<comment type="domain">
    <text evidence="1">Consists of two distinct domains, a catalytic core and a N-terminal extension that is involved in tRNA binding.</text>
</comment>
<comment type="similarity">
    <text evidence="1">Belongs to the class-II aminoacyl-tRNA synthetase family. Type-1 seryl-tRNA synthetase subfamily.</text>
</comment>
<protein>
    <recommendedName>
        <fullName evidence="1">Serine--tRNA ligase</fullName>
        <ecNumber evidence="1">6.1.1.11</ecNumber>
    </recommendedName>
    <alternativeName>
        <fullName evidence="1">Seryl-tRNA synthetase</fullName>
        <shortName evidence="1">SerRS</shortName>
    </alternativeName>
    <alternativeName>
        <fullName evidence="1">Seryl-tRNA(Ser/Sec) synthetase</fullName>
    </alternativeName>
</protein>
<sequence length="424" mass="48730">MLDIKFLRTNFEEVKAKLQHRGEDLTDFGRFEELDTRRRELLVQTEELKSKRNEVSQQISVLKREKKDAEALILEMREVGEKVKDLDNELRTVEEDLERLMLSIPNIPHESAPVGETEDDNVVARTWGEVKEFAFEPKPHWDLATDLGILDFERAGKVTGSRFVFYKGAGARLERALISFMLDLHTDEHGYEEVLPPYMVNRASMTGTGQLPKFEEDAFRIESEDYFLIPTAEVPVTNMHRDEILNKDQLPIRYAAFSSCFRSEAGSAGRDTRGLIRQHQFNKVELVKFVKPEDSYEELEKLTNDAERVLQLLELPYRVMSMCTGDLGFTAAKKYDIEVWIPSYGTYREISSCSNFEAFQARRANIRFRREPNGKPEHVHTLNGSGLAIGRTVAAILENYQQEDGTIIIPEVLRPYMGGKTVIK</sequence>
<keyword id="KW-0030">Aminoacyl-tRNA synthetase</keyword>
<keyword id="KW-0067">ATP-binding</keyword>
<keyword id="KW-0963">Cytoplasm</keyword>
<keyword id="KW-0436">Ligase</keyword>
<keyword id="KW-0547">Nucleotide-binding</keyword>
<keyword id="KW-0648">Protein biosynthesis</keyword>
<gene>
    <name evidence="1" type="primary">serS</name>
    <name type="ordered locus">BCQ_0018</name>
</gene>
<accession>B9IYI0</accession>
<feature type="chain" id="PRO_1000123870" description="Serine--tRNA ligase">
    <location>
        <begin position="1"/>
        <end position="424"/>
    </location>
</feature>
<feature type="binding site" evidence="1">
    <location>
        <begin position="231"/>
        <end position="233"/>
    </location>
    <ligand>
        <name>L-serine</name>
        <dbReference type="ChEBI" id="CHEBI:33384"/>
    </ligand>
</feature>
<feature type="binding site" evidence="1">
    <location>
        <begin position="262"/>
        <end position="264"/>
    </location>
    <ligand>
        <name>ATP</name>
        <dbReference type="ChEBI" id="CHEBI:30616"/>
    </ligand>
</feature>
<feature type="binding site" evidence="1">
    <location>
        <position position="285"/>
    </location>
    <ligand>
        <name>L-serine</name>
        <dbReference type="ChEBI" id="CHEBI:33384"/>
    </ligand>
</feature>
<feature type="binding site" evidence="1">
    <location>
        <begin position="349"/>
        <end position="352"/>
    </location>
    <ligand>
        <name>ATP</name>
        <dbReference type="ChEBI" id="CHEBI:30616"/>
    </ligand>
</feature>
<feature type="binding site" evidence="1">
    <location>
        <position position="385"/>
    </location>
    <ligand>
        <name>L-serine</name>
        <dbReference type="ChEBI" id="CHEBI:33384"/>
    </ligand>
</feature>
<organism>
    <name type="scientific">Bacillus cereus (strain Q1)</name>
    <dbReference type="NCBI Taxonomy" id="361100"/>
    <lineage>
        <taxon>Bacteria</taxon>
        <taxon>Bacillati</taxon>
        <taxon>Bacillota</taxon>
        <taxon>Bacilli</taxon>
        <taxon>Bacillales</taxon>
        <taxon>Bacillaceae</taxon>
        <taxon>Bacillus</taxon>
        <taxon>Bacillus cereus group</taxon>
    </lineage>
</organism>
<proteinExistence type="inferred from homology"/>
<evidence type="ECO:0000255" key="1">
    <source>
        <dbReference type="HAMAP-Rule" id="MF_00176"/>
    </source>
</evidence>
<reference key="1">
    <citation type="journal article" date="2009" name="J. Bacteriol.">
        <title>Complete genome sequence of the extremophilic Bacillus cereus strain Q1 with industrial applications.</title>
        <authorList>
            <person name="Xiong Z."/>
            <person name="Jiang Y."/>
            <person name="Qi D."/>
            <person name="Lu H."/>
            <person name="Yang F."/>
            <person name="Yang J."/>
            <person name="Chen L."/>
            <person name="Sun L."/>
            <person name="Xu X."/>
            <person name="Xue Y."/>
            <person name="Zhu Y."/>
            <person name="Jin Q."/>
        </authorList>
    </citation>
    <scope>NUCLEOTIDE SEQUENCE [LARGE SCALE GENOMIC DNA]</scope>
    <source>
        <strain>Q1</strain>
    </source>
</reference>
<name>SYS_BACCQ</name>
<dbReference type="EC" id="6.1.1.11" evidence="1"/>
<dbReference type="EMBL" id="CP000227">
    <property type="protein sequence ID" value="ACM10542.1"/>
    <property type="molecule type" value="Genomic_DNA"/>
</dbReference>
<dbReference type="SMR" id="B9IYI0"/>
<dbReference type="KEGG" id="bcq:BCQ_0018"/>
<dbReference type="HOGENOM" id="CLU_023797_1_1_9"/>
<dbReference type="UniPathway" id="UPA00906">
    <property type="reaction ID" value="UER00895"/>
</dbReference>
<dbReference type="Proteomes" id="UP000000441">
    <property type="component" value="Chromosome"/>
</dbReference>
<dbReference type="GO" id="GO:0005737">
    <property type="term" value="C:cytoplasm"/>
    <property type="evidence" value="ECO:0007669"/>
    <property type="project" value="UniProtKB-SubCell"/>
</dbReference>
<dbReference type="GO" id="GO:0005524">
    <property type="term" value="F:ATP binding"/>
    <property type="evidence" value="ECO:0007669"/>
    <property type="project" value="UniProtKB-UniRule"/>
</dbReference>
<dbReference type="GO" id="GO:0140096">
    <property type="term" value="F:catalytic activity, acting on a protein"/>
    <property type="evidence" value="ECO:0007669"/>
    <property type="project" value="UniProtKB-ARBA"/>
</dbReference>
<dbReference type="GO" id="GO:0004828">
    <property type="term" value="F:serine-tRNA ligase activity"/>
    <property type="evidence" value="ECO:0007669"/>
    <property type="project" value="UniProtKB-UniRule"/>
</dbReference>
<dbReference type="GO" id="GO:0016740">
    <property type="term" value="F:transferase activity"/>
    <property type="evidence" value="ECO:0007669"/>
    <property type="project" value="UniProtKB-ARBA"/>
</dbReference>
<dbReference type="GO" id="GO:0016260">
    <property type="term" value="P:selenocysteine biosynthetic process"/>
    <property type="evidence" value="ECO:0007669"/>
    <property type="project" value="UniProtKB-UniRule"/>
</dbReference>
<dbReference type="GO" id="GO:0006434">
    <property type="term" value="P:seryl-tRNA aminoacylation"/>
    <property type="evidence" value="ECO:0007669"/>
    <property type="project" value="UniProtKB-UniRule"/>
</dbReference>
<dbReference type="CDD" id="cd00770">
    <property type="entry name" value="SerRS_core"/>
    <property type="match status" value="1"/>
</dbReference>
<dbReference type="Gene3D" id="3.30.930.10">
    <property type="entry name" value="Bira Bifunctional Protein, Domain 2"/>
    <property type="match status" value="1"/>
</dbReference>
<dbReference type="Gene3D" id="1.10.287.40">
    <property type="entry name" value="Serine-tRNA synthetase, tRNA binding domain"/>
    <property type="match status" value="1"/>
</dbReference>
<dbReference type="HAMAP" id="MF_00176">
    <property type="entry name" value="Ser_tRNA_synth_type1"/>
    <property type="match status" value="1"/>
</dbReference>
<dbReference type="InterPro" id="IPR002314">
    <property type="entry name" value="aa-tRNA-synt_IIb"/>
</dbReference>
<dbReference type="InterPro" id="IPR006195">
    <property type="entry name" value="aa-tRNA-synth_II"/>
</dbReference>
<dbReference type="InterPro" id="IPR045864">
    <property type="entry name" value="aa-tRNA-synth_II/BPL/LPL"/>
</dbReference>
<dbReference type="InterPro" id="IPR002317">
    <property type="entry name" value="Ser-tRNA-ligase_type_1"/>
</dbReference>
<dbReference type="InterPro" id="IPR015866">
    <property type="entry name" value="Ser-tRNA-synth_1_N"/>
</dbReference>
<dbReference type="InterPro" id="IPR042103">
    <property type="entry name" value="SerRS_1_N_sf"/>
</dbReference>
<dbReference type="InterPro" id="IPR033729">
    <property type="entry name" value="SerRS_core"/>
</dbReference>
<dbReference type="InterPro" id="IPR010978">
    <property type="entry name" value="tRNA-bd_arm"/>
</dbReference>
<dbReference type="NCBIfam" id="TIGR00414">
    <property type="entry name" value="serS"/>
    <property type="match status" value="1"/>
</dbReference>
<dbReference type="PANTHER" id="PTHR43697:SF1">
    <property type="entry name" value="SERINE--TRNA LIGASE"/>
    <property type="match status" value="1"/>
</dbReference>
<dbReference type="PANTHER" id="PTHR43697">
    <property type="entry name" value="SERYL-TRNA SYNTHETASE"/>
    <property type="match status" value="1"/>
</dbReference>
<dbReference type="Pfam" id="PF02403">
    <property type="entry name" value="Seryl_tRNA_N"/>
    <property type="match status" value="1"/>
</dbReference>
<dbReference type="Pfam" id="PF00587">
    <property type="entry name" value="tRNA-synt_2b"/>
    <property type="match status" value="1"/>
</dbReference>
<dbReference type="PIRSF" id="PIRSF001529">
    <property type="entry name" value="Ser-tRNA-synth_IIa"/>
    <property type="match status" value="1"/>
</dbReference>
<dbReference type="PRINTS" id="PR00981">
    <property type="entry name" value="TRNASYNTHSER"/>
</dbReference>
<dbReference type="SUPFAM" id="SSF55681">
    <property type="entry name" value="Class II aaRS and biotin synthetases"/>
    <property type="match status" value="1"/>
</dbReference>
<dbReference type="SUPFAM" id="SSF46589">
    <property type="entry name" value="tRNA-binding arm"/>
    <property type="match status" value="1"/>
</dbReference>
<dbReference type="PROSITE" id="PS50862">
    <property type="entry name" value="AA_TRNA_LIGASE_II"/>
    <property type="match status" value="1"/>
</dbReference>